<accession>F4KBM7</accession>
<accession>Q9FMC0</accession>
<gene>
    <name evidence="2" type="primary">AVT6B</name>
    <name evidence="4" type="ordered locus">At5g38820</name>
    <name evidence="5" type="ORF">K15E6.7</name>
</gene>
<proteinExistence type="inferred from homology"/>
<organism>
    <name type="scientific">Arabidopsis thaliana</name>
    <name type="common">Mouse-ear cress</name>
    <dbReference type="NCBI Taxonomy" id="3702"/>
    <lineage>
        <taxon>Eukaryota</taxon>
        <taxon>Viridiplantae</taxon>
        <taxon>Streptophyta</taxon>
        <taxon>Embryophyta</taxon>
        <taxon>Tracheophyta</taxon>
        <taxon>Spermatophyta</taxon>
        <taxon>Magnoliopsida</taxon>
        <taxon>eudicotyledons</taxon>
        <taxon>Gunneridae</taxon>
        <taxon>Pentapetalae</taxon>
        <taxon>rosids</taxon>
        <taxon>malvids</taxon>
        <taxon>Brassicales</taxon>
        <taxon>Brassicaceae</taxon>
        <taxon>Camelineae</taxon>
        <taxon>Arabidopsis</taxon>
    </lineage>
</organism>
<keyword id="KW-0029">Amino-acid transport</keyword>
<keyword id="KW-0472">Membrane</keyword>
<keyword id="KW-1185">Reference proteome</keyword>
<keyword id="KW-0812">Transmembrane</keyword>
<keyword id="KW-1133">Transmembrane helix</keyword>
<keyword id="KW-0813">Transport</keyword>
<name>AVT6B_ARATH</name>
<sequence length="456" mass="49678">MENLDEIRTDIVESTAPLLQESSSESNGGGEFNGASFSGAVFNLATTIIGAGIMALPATMKILGLIPGITIIVLMAFLTDASIEFLLRFSNIGNQRSYGGVMDDSFGKCGRIMLQVSILVSNIGVLIVYMIIIGDVLAGKNEYGIHHAGMLEGWFGISWWNRRTFVLLVTTLTVFAPLTCFKRIDSLRFTSAISVALAVVFLVITAGITIIKLFTDGLMMPRLLPNVTDLSSFWKLFTVVPVLVNAYICHYNVHSIQNELEDPSRIKPVVRSALAMCSSVYVMTSLFGYLLFGDGTLDDVLANFDTDLGIPFGSVLNDAVRFSYAAHLMLVFPVVFYPLRINIDGLIFPTAPPLTSSESDLRFGSITAGLIAVIFLGANFIPSIWDAFQFTGATAAVCIGFIFPAAVILKDRHNQATKRDKTIAICMIVLAVFSNAIAIYSDAYALFKKHTYVYPI</sequence>
<comment type="subcellular location">
    <subcellularLocation>
        <location evidence="1">Membrane</location>
        <topology evidence="1">Multi-pass membrane protein</topology>
    </subcellularLocation>
</comment>
<comment type="similarity">
    <text evidence="3">Belongs to the amino acid/polyamine transporter 2 family. Amino acid/auxin permease (AAAP) (TC 2.A.18.6) subfamily.</text>
</comment>
<comment type="sequence caution" evidence="3">
    <conflict type="erroneous initiation">
        <sequence resource="EMBL-CDS" id="ANM68525"/>
    </conflict>
    <text>Extended N-terminus.</text>
</comment>
<comment type="sequence caution" evidence="3">
    <conflict type="erroneous initiation">
        <sequence resource="EMBL-CDS" id="BAB08638"/>
    </conflict>
    <text>Extended N-terminus.</text>
</comment>
<feature type="chain" id="PRO_0000440113" description="Amino acid transporter AVT6B">
    <location>
        <begin position="1"/>
        <end position="456"/>
    </location>
</feature>
<feature type="transmembrane region" description="Helical; Name=1" evidence="1">
    <location>
        <begin position="37"/>
        <end position="57"/>
    </location>
</feature>
<feature type="transmembrane region" description="Helical; Name=2" evidence="1">
    <location>
        <begin position="58"/>
        <end position="78"/>
    </location>
</feature>
<feature type="transmembrane region" description="Helical; Name=3" evidence="1">
    <location>
        <begin position="118"/>
        <end position="138"/>
    </location>
</feature>
<feature type="transmembrane region" description="Helical; Name=4" evidence="1">
    <location>
        <begin position="164"/>
        <end position="184"/>
    </location>
</feature>
<feature type="transmembrane region" description="Helical; Name=5" evidence="1">
    <location>
        <begin position="191"/>
        <end position="211"/>
    </location>
</feature>
<feature type="transmembrane region" description="Helical; Name=6" evidence="1">
    <location>
        <begin position="236"/>
        <end position="256"/>
    </location>
</feature>
<feature type="transmembrane region" description="Helical; Name=7" evidence="1">
    <location>
        <begin position="273"/>
        <end position="293"/>
    </location>
</feature>
<feature type="transmembrane region" description="Helical; Name=8" evidence="1">
    <location>
        <begin position="328"/>
        <end position="348"/>
    </location>
</feature>
<feature type="transmembrane region" description="Helical; Name=9" evidence="1">
    <location>
        <begin position="365"/>
        <end position="385"/>
    </location>
</feature>
<feature type="transmembrane region" description="Helical; Name=10" evidence="1">
    <location>
        <begin position="388"/>
        <end position="408"/>
    </location>
</feature>
<feature type="transmembrane region" description="Helical; Name=11" evidence="1">
    <location>
        <begin position="423"/>
        <end position="443"/>
    </location>
</feature>
<reference key="1">
    <citation type="journal article" date="1998" name="DNA Res.">
        <title>Structural analysis of Arabidopsis thaliana chromosome 5. IV. Sequence features of the regions of 1,456,315 bp covered by nineteen physically assigned P1 and TAC clones.</title>
        <authorList>
            <person name="Sato S."/>
            <person name="Kaneko T."/>
            <person name="Kotani H."/>
            <person name="Nakamura Y."/>
            <person name="Asamizu E."/>
            <person name="Miyajima N."/>
            <person name="Tabata S."/>
        </authorList>
    </citation>
    <scope>NUCLEOTIDE SEQUENCE [LARGE SCALE GENOMIC DNA]</scope>
    <source>
        <strain>cv. Columbia</strain>
    </source>
</reference>
<reference key="2">
    <citation type="journal article" date="2017" name="Plant J.">
        <title>Araport11: a complete reannotation of the Arabidopsis thaliana reference genome.</title>
        <authorList>
            <person name="Cheng C.Y."/>
            <person name="Krishnakumar V."/>
            <person name="Chan A.P."/>
            <person name="Thibaud-Nissen F."/>
            <person name="Schobel S."/>
            <person name="Town C.D."/>
        </authorList>
    </citation>
    <scope>GENOME REANNOTATION</scope>
    <source>
        <strain>cv. Columbia</strain>
    </source>
</reference>
<reference key="3">
    <citation type="journal article" date="2017" name="FEBS Lett.">
        <title>Functional identification of AtAVT3, a family of vacuolar amino acid transporters, in Arabidopsis.</title>
        <authorList>
            <person name="Fujiki Y."/>
            <person name="Teshima H."/>
            <person name="Kashiwao S."/>
            <person name="Kawano-Kawada M."/>
            <person name="Ohsumi Y."/>
            <person name="Kakinuma Y."/>
            <person name="Sekito T."/>
        </authorList>
    </citation>
    <scope>GENE FAMILY</scope>
    <scope>NOMENCLATURE</scope>
</reference>
<evidence type="ECO:0000255" key="1"/>
<evidence type="ECO:0000303" key="2">
    <source>
    </source>
</evidence>
<evidence type="ECO:0000305" key="3"/>
<evidence type="ECO:0000312" key="4">
    <source>
        <dbReference type="Araport" id="AT5G38820"/>
    </source>
</evidence>
<evidence type="ECO:0000312" key="5">
    <source>
        <dbReference type="EMBL" id="BAB08638.1"/>
    </source>
</evidence>
<dbReference type="EMBL" id="AB009048">
    <property type="protein sequence ID" value="BAB08638.1"/>
    <property type="status" value="ALT_SEQ"/>
    <property type="molecule type" value="Genomic_DNA"/>
</dbReference>
<dbReference type="EMBL" id="CP002688">
    <property type="protein sequence ID" value="AED94363.1"/>
    <property type="molecule type" value="Genomic_DNA"/>
</dbReference>
<dbReference type="EMBL" id="CP002688">
    <property type="protein sequence ID" value="ANM68525.1"/>
    <property type="status" value="ALT_SEQ"/>
    <property type="molecule type" value="Genomic_DNA"/>
</dbReference>
<dbReference type="EMBL" id="CP002688">
    <property type="protein sequence ID" value="ANM68526.1"/>
    <property type="molecule type" value="Genomic_DNA"/>
</dbReference>
<dbReference type="RefSeq" id="NP_001318700.1">
    <property type="nucleotide sequence ID" value="NM_001344269.1"/>
</dbReference>
<dbReference type="RefSeq" id="NP_001330273.1">
    <property type="nucleotide sequence ID" value="NM_001344270.1"/>
</dbReference>
<dbReference type="RefSeq" id="NP_198698.1">
    <property type="nucleotide sequence ID" value="NM_123243.1"/>
</dbReference>
<dbReference type="SMR" id="F4KBM7"/>
<dbReference type="FunCoup" id="F4KBM7">
    <property type="interactions" value="809"/>
</dbReference>
<dbReference type="STRING" id="3702.F4KBM7"/>
<dbReference type="PaxDb" id="3702-AT5G38820.1"/>
<dbReference type="ProteomicsDB" id="241159"/>
<dbReference type="EnsemblPlants" id="AT5G38820.1">
    <property type="protein sequence ID" value="AT5G38820.1"/>
    <property type="gene ID" value="AT5G38820"/>
</dbReference>
<dbReference type="EnsemblPlants" id="AT5G38820.3">
    <property type="protein sequence ID" value="AT5G38820.3"/>
    <property type="gene ID" value="AT5G38820"/>
</dbReference>
<dbReference type="GeneID" id="833873"/>
<dbReference type="Gramene" id="AT5G38820.1">
    <property type="protein sequence ID" value="AT5G38820.1"/>
    <property type="gene ID" value="AT5G38820"/>
</dbReference>
<dbReference type="Gramene" id="AT5G38820.3">
    <property type="protein sequence ID" value="AT5G38820.3"/>
    <property type="gene ID" value="AT5G38820"/>
</dbReference>
<dbReference type="KEGG" id="ath:AT5G38820"/>
<dbReference type="Araport" id="AT5G38820"/>
<dbReference type="TAIR" id="AT5G38820"/>
<dbReference type="eggNOG" id="KOG1305">
    <property type="taxonomic scope" value="Eukaryota"/>
</dbReference>
<dbReference type="HOGENOM" id="CLU_034419_2_0_1"/>
<dbReference type="InParanoid" id="F4KBM7"/>
<dbReference type="PRO" id="PR:F4KBM7"/>
<dbReference type="Proteomes" id="UP000006548">
    <property type="component" value="Chromosome 5"/>
</dbReference>
<dbReference type="ExpressionAtlas" id="F4KBM7">
    <property type="expression patterns" value="baseline and differential"/>
</dbReference>
<dbReference type="GO" id="GO:0031090">
    <property type="term" value="C:organelle membrane"/>
    <property type="evidence" value="ECO:0007669"/>
    <property type="project" value="UniProtKB-ARBA"/>
</dbReference>
<dbReference type="GO" id="GO:0006865">
    <property type="term" value="P:amino acid transport"/>
    <property type="evidence" value="ECO:0007669"/>
    <property type="project" value="UniProtKB-KW"/>
</dbReference>
<dbReference type="InterPro" id="IPR013057">
    <property type="entry name" value="AA_transpt_TM"/>
</dbReference>
<dbReference type="PANTHER" id="PTHR22950">
    <property type="entry name" value="AMINO ACID TRANSPORTER"/>
    <property type="match status" value="1"/>
</dbReference>
<dbReference type="PANTHER" id="PTHR22950:SF518">
    <property type="entry name" value="AMINO ACID TRANSPORTER AVT6B"/>
    <property type="match status" value="1"/>
</dbReference>
<dbReference type="Pfam" id="PF01490">
    <property type="entry name" value="Aa_trans"/>
    <property type="match status" value="1"/>
</dbReference>
<protein>
    <recommendedName>
        <fullName evidence="3">Amino acid transporter AVT6B</fullName>
        <shortName evidence="2">AtAvt6B</shortName>
    </recommendedName>
</protein>